<gene>
    <name evidence="1" type="primary">rplQ</name>
    <name type="ordered locus">C8J_1498</name>
</gene>
<reference key="1">
    <citation type="journal article" date="2007" name="J. Bacteriol.">
        <title>The complete genome sequence of Campylobacter jejuni strain 81116 (NCTC11828).</title>
        <authorList>
            <person name="Pearson B.M."/>
            <person name="Gaskin D.J.H."/>
            <person name="Segers R.P.A.M."/>
            <person name="Wells J.M."/>
            <person name="Nuijten P.J.M."/>
            <person name="van Vliet A.H.M."/>
        </authorList>
    </citation>
    <scope>NUCLEOTIDE SEQUENCE [LARGE SCALE GENOMIC DNA]</scope>
    <source>
        <strain>81116 / NCTC 11828</strain>
    </source>
</reference>
<dbReference type="EMBL" id="CP000814">
    <property type="protein sequence ID" value="ABV53095.1"/>
    <property type="molecule type" value="Genomic_DNA"/>
</dbReference>
<dbReference type="RefSeq" id="WP_002851332.1">
    <property type="nucleotide sequence ID" value="NC_009839.1"/>
</dbReference>
<dbReference type="SMR" id="A8FNQ8"/>
<dbReference type="KEGG" id="cju:C8J_1498"/>
<dbReference type="HOGENOM" id="CLU_074407_2_0_7"/>
<dbReference type="GO" id="GO:0022625">
    <property type="term" value="C:cytosolic large ribosomal subunit"/>
    <property type="evidence" value="ECO:0007669"/>
    <property type="project" value="TreeGrafter"/>
</dbReference>
<dbReference type="GO" id="GO:0003735">
    <property type="term" value="F:structural constituent of ribosome"/>
    <property type="evidence" value="ECO:0007669"/>
    <property type="project" value="InterPro"/>
</dbReference>
<dbReference type="GO" id="GO:0006412">
    <property type="term" value="P:translation"/>
    <property type="evidence" value="ECO:0007669"/>
    <property type="project" value="UniProtKB-UniRule"/>
</dbReference>
<dbReference type="FunFam" id="3.90.1030.10:FF:000003">
    <property type="entry name" value="50S ribosomal protein L17"/>
    <property type="match status" value="1"/>
</dbReference>
<dbReference type="Gene3D" id="3.90.1030.10">
    <property type="entry name" value="Ribosomal protein L17"/>
    <property type="match status" value="1"/>
</dbReference>
<dbReference type="HAMAP" id="MF_01368">
    <property type="entry name" value="Ribosomal_bL17"/>
    <property type="match status" value="1"/>
</dbReference>
<dbReference type="InterPro" id="IPR000456">
    <property type="entry name" value="Ribosomal_bL17"/>
</dbReference>
<dbReference type="InterPro" id="IPR047859">
    <property type="entry name" value="Ribosomal_bL17_CS"/>
</dbReference>
<dbReference type="InterPro" id="IPR036373">
    <property type="entry name" value="Ribosomal_bL17_sf"/>
</dbReference>
<dbReference type="NCBIfam" id="TIGR00059">
    <property type="entry name" value="L17"/>
    <property type="match status" value="1"/>
</dbReference>
<dbReference type="PANTHER" id="PTHR14413:SF16">
    <property type="entry name" value="LARGE RIBOSOMAL SUBUNIT PROTEIN BL17M"/>
    <property type="match status" value="1"/>
</dbReference>
<dbReference type="PANTHER" id="PTHR14413">
    <property type="entry name" value="RIBOSOMAL PROTEIN L17"/>
    <property type="match status" value="1"/>
</dbReference>
<dbReference type="Pfam" id="PF01196">
    <property type="entry name" value="Ribosomal_L17"/>
    <property type="match status" value="1"/>
</dbReference>
<dbReference type="SUPFAM" id="SSF64263">
    <property type="entry name" value="Prokaryotic ribosomal protein L17"/>
    <property type="match status" value="1"/>
</dbReference>
<dbReference type="PROSITE" id="PS01167">
    <property type="entry name" value="RIBOSOMAL_L17"/>
    <property type="match status" value="1"/>
</dbReference>
<organism>
    <name type="scientific">Campylobacter jejuni subsp. jejuni serotype O:6 (strain 81116 / NCTC 11828)</name>
    <dbReference type="NCBI Taxonomy" id="407148"/>
    <lineage>
        <taxon>Bacteria</taxon>
        <taxon>Pseudomonadati</taxon>
        <taxon>Campylobacterota</taxon>
        <taxon>Epsilonproteobacteria</taxon>
        <taxon>Campylobacterales</taxon>
        <taxon>Campylobacteraceae</taxon>
        <taxon>Campylobacter</taxon>
    </lineage>
</organism>
<evidence type="ECO:0000255" key="1">
    <source>
        <dbReference type="HAMAP-Rule" id="MF_01368"/>
    </source>
</evidence>
<evidence type="ECO:0000305" key="2"/>
<comment type="subunit">
    <text evidence="1">Part of the 50S ribosomal subunit. Contacts protein L32.</text>
</comment>
<comment type="similarity">
    <text evidence="1">Belongs to the bacterial ribosomal protein bL17 family.</text>
</comment>
<keyword id="KW-0687">Ribonucleoprotein</keyword>
<keyword id="KW-0689">Ribosomal protein</keyword>
<feature type="chain" id="PRO_1000073431" description="Large ribosomal subunit protein bL17">
    <location>
        <begin position="1"/>
        <end position="117"/>
    </location>
</feature>
<sequence>MRHKHGYRKLGRTSSHRAALLKNLTIALVNSGKIETTLPKAKELRGYVERLITRARLGDFNAHRAVFASLQDKNATNKLVTEIAPKFKDRNGGYTRIIKTRIRRGDAAEMAFIEFVA</sequence>
<proteinExistence type="inferred from homology"/>
<name>RL17_CAMJ8</name>
<accession>A8FNQ8</accession>
<protein>
    <recommendedName>
        <fullName evidence="1">Large ribosomal subunit protein bL17</fullName>
    </recommendedName>
    <alternativeName>
        <fullName evidence="2">50S ribosomal protein L17</fullName>
    </alternativeName>
</protein>